<keyword id="KW-0221">Differentiation</keyword>
<keyword id="KW-0238">DNA-binding</keyword>
<keyword id="KW-0539">Nucleus</keyword>
<keyword id="KW-1185">Reference proteome</keyword>
<keyword id="KW-0804">Transcription</keyword>
<keyword id="KW-0805">Transcription regulation</keyword>
<feature type="chain" id="PRO_0000358828" description="Transcription factor UPBEAT1">
    <location>
        <begin position="1"/>
        <end position="102"/>
    </location>
</feature>
<feature type="domain" description="bHLH" evidence="1">
    <location>
        <begin position="32"/>
        <end position="82"/>
    </location>
</feature>
<feature type="sequence conflict" description="In Ref. 4; AAM63189." evidence="3" ref="4">
    <original>K</original>
    <variation>R</variation>
    <location>
        <position position="87"/>
    </location>
</feature>
<feature type="sequence conflict" description="In Ref. 4; AAM63189." evidence="3" ref="4">
    <original>N</original>
    <variation>D</variation>
    <location>
        <position position="100"/>
    </location>
</feature>
<evidence type="ECO:0000255" key="1">
    <source>
        <dbReference type="PROSITE-ProRule" id="PRU00981"/>
    </source>
</evidence>
<evidence type="ECO:0000269" key="2">
    <source>
    </source>
</evidence>
<evidence type="ECO:0000305" key="3"/>
<gene>
    <name type="primary">UPB1</name>
    <name type="synonym">BHLH151</name>
    <name type="synonym">EN146</name>
    <name type="ordered locus">At2g47270</name>
    <name type="ORF">T8I13.11</name>
</gene>
<reference key="1">
    <citation type="journal article" date="1999" name="Nature">
        <title>Sequence and analysis of chromosome 2 of the plant Arabidopsis thaliana.</title>
        <authorList>
            <person name="Lin X."/>
            <person name="Kaul S."/>
            <person name="Rounsley S.D."/>
            <person name="Shea T.P."/>
            <person name="Benito M.-I."/>
            <person name="Town C.D."/>
            <person name="Fujii C.Y."/>
            <person name="Mason T.M."/>
            <person name="Bowman C.L."/>
            <person name="Barnstead M.E."/>
            <person name="Feldblyum T.V."/>
            <person name="Buell C.R."/>
            <person name="Ketchum K.A."/>
            <person name="Lee J.J."/>
            <person name="Ronning C.M."/>
            <person name="Koo H.L."/>
            <person name="Moffat K.S."/>
            <person name="Cronin L.A."/>
            <person name="Shen M."/>
            <person name="Pai G."/>
            <person name="Van Aken S."/>
            <person name="Umayam L."/>
            <person name="Tallon L.J."/>
            <person name="Gill J.E."/>
            <person name="Adams M.D."/>
            <person name="Carrera A.J."/>
            <person name="Creasy T.H."/>
            <person name="Goodman H.M."/>
            <person name="Somerville C.R."/>
            <person name="Copenhaver G.P."/>
            <person name="Preuss D."/>
            <person name="Nierman W.C."/>
            <person name="White O."/>
            <person name="Eisen J.A."/>
            <person name="Salzberg S.L."/>
            <person name="Fraser C.M."/>
            <person name="Venter J.C."/>
        </authorList>
    </citation>
    <scope>NUCLEOTIDE SEQUENCE [LARGE SCALE GENOMIC DNA]</scope>
    <source>
        <strain>cv. Columbia</strain>
    </source>
</reference>
<reference key="2">
    <citation type="journal article" date="2017" name="Plant J.">
        <title>Araport11: a complete reannotation of the Arabidopsis thaliana reference genome.</title>
        <authorList>
            <person name="Cheng C.Y."/>
            <person name="Krishnakumar V."/>
            <person name="Chan A.P."/>
            <person name="Thibaud-Nissen F."/>
            <person name="Schobel S."/>
            <person name="Town C.D."/>
        </authorList>
    </citation>
    <scope>GENOME REANNOTATION</scope>
    <source>
        <strain>cv. Columbia</strain>
    </source>
</reference>
<reference key="3">
    <citation type="submission" date="2006-03" db="EMBL/GenBank/DDBJ databases">
        <title>Arabidopsis ORF clones.</title>
        <authorList>
            <person name="Kim C.J."/>
            <person name="Chen H."/>
            <person name="Shinn P."/>
            <person name="Ecker J.R."/>
        </authorList>
    </citation>
    <scope>NUCLEOTIDE SEQUENCE [LARGE SCALE MRNA]</scope>
    <source>
        <strain>cv. Columbia</strain>
    </source>
</reference>
<reference key="4">
    <citation type="submission" date="2002-03" db="EMBL/GenBank/DDBJ databases">
        <title>Full-length cDNA from Arabidopsis thaliana.</title>
        <authorList>
            <person name="Brover V.V."/>
            <person name="Troukhan M.E."/>
            <person name="Alexandrov N.A."/>
            <person name="Lu Y.-P."/>
            <person name="Flavell R.B."/>
            <person name="Feldmann K.A."/>
        </authorList>
    </citation>
    <scope>NUCLEOTIDE SEQUENCE [LARGE SCALE MRNA]</scope>
</reference>
<reference key="5">
    <citation type="submission" date="2009-03" db="EMBL/GenBank/DDBJ databases">
        <title>ORF cloning and analysis of arabidopsis transcription factor genes.</title>
        <authorList>
            <person name="Fujita M."/>
            <person name="Mizukado S."/>
            <person name="Seki M."/>
            <person name="Shinozaki K."/>
            <person name="Mitsuda N."/>
            <person name="Takiguchi Y."/>
            <person name="Takagi M."/>
        </authorList>
    </citation>
    <scope>NUCLEOTIDE SEQUENCE [LARGE SCALE MRNA]</scope>
</reference>
<reference key="6">
    <citation type="journal article" date="2003" name="Plant Cell">
        <title>The Arabidopsis basic/helix-loop-helix transcription factor family.</title>
        <authorList>
            <person name="Toledo-Ortiz G."/>
            <person name="Huq E."/>
            <person name="Quail P.H."/>
        </authorList>
    </citation>
    <scope>GENE FAMILY</scope>
    <scope>NOMENCLATURE</scope>
</reference>
<reference key="7">
    <citation type="journal article" date="2003" name="Plant Cell">
        <title>Update on the basic helix-loop-helix transcription factor gene family in Arabidopsis thaliana.</title>
        <authorList>
            <person name="Bailey P.C."/>
            <person name="Martin C."/>
            <person name="Toledo-Ortiz G."/>
            <person name="Quail P.H."/>
            <person name="Huq E."/>
            <person name="Heim M.A."/>
            <person name="Jakoby M."/>
            <person name="Werber M."/>
            <person name="Weisshaar B."/>
        </authorList>
    </citation>
    <scope>GENE FAMILY</scope>
    <scope>NOMENCLATURE</scope>
</reference>
<reference key="8">
    <citation type="journal article" date="2010" name="Cell">
        <title>Transcriptional regulation of ROS controls transition from proliferation to differentiation in the root.</title>
        <authorList>
            <person name="Tsukagoshi H."/>
            <person name="Busch W."/>
            <person name="Benfey P.N."/>
        </authorList>
    </citation>
    <scope>FUNCTION</scope>
    <scope>DISRUPTION PHENOTYPE</scope>
    <scope>SUBCELLULAR LOCATION</scope>
    <scope>TISSUE SPECIFICITY</scope>
    <scope>INDUCTION</scope>
</reference>
<comment type="function">
    <text evidence="2">Transcription factor that modulates the balance between cellular proliferation and differentiation in root growth. Does not act through cytokinin and auxin signaling, but by repressing peroxidase expression in the elongation zone.</text>
</comment>
<comment type="subunit">
    <text evidence="3">Homodimer.</text>
</comment>
<comment type="subcellular location">
    <subcellularLocation>
        <location evidence="1 2">Nucleus</location>
    </subcellularLocation>
</comment>
<comment type="tissue specificity">
    <text evidence="2">Expressed in the root vascular tissue and in root hairs and lateral root caps. Detected at the protein level in all cell files in the elongation zone.</text>
</comment>
<comment type="induction">
    <text evidence="2">Up-regulated by reactive oxygen species.</text>
</comment>
<comment type="disruption phenotype">
    <text evidence="2">Enlargment of the meristem and longer root length.</text>
</comment>
<comment type="sequence caution" evidence="3">
    <conflict type="erroneous initiation">
        <sequence resource="EMBL-CDS" id="AAM63189"/>
    </conflict>
    <text>Truncated N-terminus.</text>
</comment>
<name>BH151_ARATH</name>
<organism>
    <name type="scientific">Arabidopsis thaliana</name>
    <name type="common">Mouse-ear cress</name>
    <dbReference type="NCBI Taxonomy" id="3702"/>
    <lineage>
        <taxon>Eukaryota</taxon>
        <taxon>Viridiplantae</taxon>
        <taxon>Streptophyta</taxon>
        <taxon>Embryophyta</taxon>
        <taxon>Tracheophyta</taxon>
        <taxon>Spermatophyta</taxon>
        <taxon>Magnoliopsida</taxon>
        <taxon>eudicotyledons</taxon>
        <taxon>Gunneridae</taxon>
        <taxon>Pentapetalae</taxon>
        <taxon>rosids</taxon>
        <taxon>malvids</taxon>
        <taxon>Brassicales</taxon>
        <taxon>Brassicaceae</taxon>
        <taxon>Camelineae</taxon>
        <taxon>Arabidopsis</taxon>
    </lineage>
</organism>
<protein>
    <recommendedName>
        <fullName>Transcription factor UPBEAT1</fullName>
    </recommendedName>
    <alternativeName>
        <fullName>Basic helix-loop-helix protein 151</fullName>
        <shortName>AtbHLH151</shortName>
        <shortName>bHLH 151</shortName>
    </alternativeName>
    <alternativeName>
        <fullName>Transcription factor EN 146</fullName>
    </alternativeName>
    <alternativeName>
        <fullName>Transcription factor bHLH151</fullName>
    </alternativeName>
    <alternativeName>
        <fullName>bHLH transcription factor bHLH151</fullName>
    </alternativeName>
</protein>
<dbReference type="EMBL" id="AC002337">
    <property type="protein sequence ID" value="AAB63827.1"/>
    <property type="molecule type" value="Genomic_DNA"/>
</dbReference>
<dbReference type="EMBL" id="CP002685">
    <property type="protein sequence ID" value="AEC10822.1"/>
    <property type="molecule type" value="Genomic_DNA"/>
</dbReference>
<dbReference type="EMBL" id="BT024807">
    <property type="protein sequence ID" value="ABD60690.1"/>
    <property type="molecule type" value="mRNA"/>
</dbReference>
<dbReference type="EMBL" id="AY085979">
    <property type="protein sequence ID" value="AAM63189.1"/>
    <property type="status" value="ALT_INIT"/>
    <property type="molecule type" value="mRNA"/>
</dbReference>
<dbReference type="EMBL" id="AB493596">
    <property type="protein sequence ID" value="BAH30434.1"/>
    <property type="molecule type" value="mRNA"/>
</dbReference>
<dbReference type="PIR" id="B84913">
    <property type="entry name" value="B84913"/>
</dbReference>
<dbReference type="RefSeq" id="NP_566098.1">
    <property type="nucleotide sequence ID" value="NM_130295.3"/>
</dbReference>
<dbReference type="SMR" id="O22901"/>
<dbReference type="BioGRID" id="4675">
    <property type="interactions" value="2"/>
</dbReference>
<dbReference type="FunCoup" id="O22901">
    <property type="interactions" value="32"/>
</dbReference>
<dbReference type="IntAct" id="O22901">
    <property type="interactions" value="2"/>
</dbReference>
<dbReference type="STRING" id="3702.O22901"/>
<dbReference type="PaxDb" id="3702-AT2G47270.1"/>
<dbReference type="ProteomicsDB" id="240684"/>
<dbReference type="EnsemblPlants" id="AT2G47270.1">
    <property type="protein sequence ID" value="AT2G47270.1"/>
    <property type="gene ID" value="AT2G47270"/>
</dbReference>
<dbReference type="GeneID" id="819340"/>
<dbReference type="Gramene" id="AT2G47270.1">
    <property type="protein sequence ID" value="AT2G47270.1"/>
    <property type="gene ID" value="AT2G47270"/>
</dbReference>
<dbReference type="KEGG" id="ath:AT2G47270"/>
<dbReference type="Araport" id="AT2G47270"/>
<dbReference type="TAIR" id="AT2G47270">
    <property type="gene designation" value="UPB1"/>
</dbReference>
<dbReference type="eggNOG" id="ENOG502S5A4">
    <property type="taxonomic scope" value="Eukaryota"/>
</dbReference>
<dbReference type="HOGENOM" id="CLU_161672_0_0_1"/>
<dbReference type="InParanoid" id="O22901"/>
<dbReference type="OMA" id="MLMKRIP"/>
<dbReference type="PhylomeDB" id="O22901"/>
<dbReference type="PRO" id="PR:O22901"/>
<dbReference type="Proteomes" id="UP000006548">
    <property type="component" value="Chromosome 2"/>
</dbReference>
<dbReference type="ExpressionAtlas" id="O22901">
    <property type="expression patterns" value="baseline and differential"/>
</dbReference>
<dbReference type="GO" id="GO:0005634">
    <property type="term" value="C:nucleus"/>
    <property type="evidence" value="ECO:0007669"/>
    <property type="project" value="UniProtKB-SubCell"/>
</dbReference>
<dbReference type="GO" id="GO:0003700">
    <property type="term" value="F:DNA-binding transcription factor activity"/>
    <property type="evidence" value="ECO:0000314"/>
    <property type="project" value="TAIR"/>
</dbReference>
<dbReference type="GO" id="GO:0046983">
    <property type="term" value="F:protein dimerization activity"/>
    <property type="evidence" value="ECO:0007669"/>
    <property type="project" value="InterPro"/>
</dbReference>
<dbReference type="GO" id="GO:0000976">
    <property type="term" value="F:transcription cis-regulatory region binding"/>
    <property type="evidence" value="ECO:0000353"/>
    <property type="project" value="TAIR"/>
</dbReference>
<dbReference type="GO" id="GO:0030154">
    <property type="term" value="P:cell differentiation"/>
    <property type="evidence" value="ECO:0007669"/>
    <property type="project" value="UniProtKB-KW"/>
</dbReference>
<dbReference type="GO" id="GO:0006355">
    <property type="term" value="P:regulation of DNA-templated transcription"/>
    <property type="evidence" value="ECO:0000304"/>
    <property type="project" value="TAIR"/>
</dbReference>
<dbReference type="GO" id="GO:2000280">
    <property type="term" value="P:regulation of root development"/>
    <property type="evidence" value="ECO:0000315"/>
    <property type="project" value="TAIR"/>
</dbReference>
<dbReference type="CDD" id="cd11444">
    <property type="entry name" value="bHLH_AtIBH1_like"/>
    <property type="match status" value="1"/>
</dbReference>
<dbReference type="InterPro" id="IPR044549">
    <property type="entry name" value="bHLH_AtIBH1-like"/>
</dbReference>
<dbReference type="InterPro" id="IPR011598">
    <property type="entry name" value="bHLH_dom"/>
</dbReference>
<dbReference type="InterPro" id="IPR044660">
    <property type="entry name" value="IBH1-like"/>
</dbReference>
<dbReference type="PANTHER" id="PTHR33124">
    <property type="entry name" value="TRANSCRIPTION FACTOR IBH1-LIKE 1"/>
    <property type="match status" value="1"/>
</dbReference>
<dbReference type="PANTHER" id="PTHR33124:SF39">
    <property type="entry name" value="TRANSCRIPTION FACTOR UPBEAT1"/>
    <property type="match status" value="1"/>
</dbReference>
<dbReference type="PROSITE" id="PS50888">
    <property type="entry name" value="BHLH"/>
    <property type="match status" value="1"/>
</dbReference>
<proteinExistence type="evidence at transcript level"/>
<sequence length="102" mass="11879">MGVTLEGQRKESIWVLMRRQRARRALVKKIMIRPRKSVEASRRPCRAIHRRVKTLKELVPNTKTSEGLDGLFRQTADYILALEMKVKVMQTMVQVLTETNCV</sequence>
<accession>O22901</accession>
<accession>C0SV93</accession>
<accession>Q8LDJ3</accession>